<comment type="function">
    <text evidence="1">May increase intracellular calcium release through the activation of nuclear inositol 1,4,5-trisphosphate receptors (ITPR) of cardiomyocytes, thereby causing an increase in the contraction frequency of these cells.</text>
</comment>
<comment type="subcellular location">
    <subcellularLocation>
        <location evidence="5">Secreted</location>
    </subcellularLocation>
</comment>
<comment type="tissue specificity">
    <text evidence="5">Expressed by the venom gland.</text>
</comment>
<comment type="domain">
    <text evidence="2">The presence of a 'disulfide through disulfide knot' structurally defines this protein as a knottin.</text>
</comment>
<comment type="similarity">
    <text evidence="4">Belongs to the scorpion calcin-like family.</text>
</comment>
<accession>F1CIZ6</accession>
<feature type="signal peptide" evidence="3">
    <location>
        <begin position="1"/>
        <end position="18"/>
    </location>
</feature>
<feature type="chain" id="PRO_5003265156" description="Phi-buthitoxin-Hj1a">
    <location>
        <begin position="19"/>
        <end position="64"/>
    </location>
</feature>
<feature type="disulfide bond" evidence="2">
    <location>
        <begin position="29"/>
        <end position="43"/>
    </location>
</feature>
<feature type="disulfide bond" evidence="2">
    <location>
        <begin position="36"/>
        <end position="49"/>
    </location>
</feature>
<feature type="disulfide bond" evidence="2">
    <location>
        <begin position="42"/>
        <end position="58"/>
    </location>
</feature>
<reference key="1">
    <citation type="journal article" date="2011" name="Toxicon">
        <title>The tale of a resting gland: transcriptome of a replete venom gland from the scorpion Hottentotta judaicus.</title>
        <authorList>
            <person name="Morgenstern D."/>
            <person name="Rohde B.H."/>
            <person name="King G.F."/>
            <person name="Tal T."/>
            <person name="Sher D."/>
            <person name="Zlotkin E."/>
        </authorList>
    </citation>
    <scope>NUCLEOTIDE SEQUENCE [MRNA]</scope>
    <source>
        <tissue>Venom gland</tissue>
    </source>
</reference>
<organism>
    <name type="scientific">Hottentotta judaicus</name>
    <name type="common">Black scorpion</name>
    <name type="synonym">Buthotus judaicus</name>
    <dbReference type="NCBI Taxonomy" id="6863"/>
    <lineage>
        <taxon>Eukaryota</taxon>
        <taxon>Metazoa</taxon>
        <taxon>Ecdysozoa</taxon>
        <taxon>Arthropoda</taxon>
        <taxon>Chelicerata</taxon>
        <taxon>Arachnida</taxon>
        <taxon>Scorpiones</taxon>
        <taxon>Buthida</taxon>
        <taxon>Buthoidea</taxon>
        <taxon>Buthidae</taxon>
        <taxon>Hottentotta</taxon>
    </lineage>
</organism>
<keyword id="KW-0123">Cardiotoxin</keyword>
<keyword id="KW-1015">Disulfide bond</keyword>
<keyword id="KW-0964">Secreted</keyword>
<keyword id="KW-0732">Signal</keyword>
<keyword id="KW-0800">Toxin</keyword>
<sequence length="64" mass="7061">MNSFVVVLLLFIAILCNAEQESDENARSCNRLGKKCNSDGDCCRYGERCLSSGVGYYCKPDFGP</sequence>
<dbReference type="EMBL" id="HQ288104">
    <property type="protein sequence ID" value="ADY39527.1"/>
    <property type="molecule type" value="mRNA"/>
</dbReference>
<dbReference type="SMR" id="F1CIZ6"/>
<dbReference type="GO" id="GO:0005576">
    <property type="term" value="C:extracellular region"/>
    <property type="evidence" value="ECO:0007669"/>
    <property type="project" value="UniProtKB-SubCell"/>
</dbReference>
<dbReference type="GO" id="GO:0090729">
    <property type="term" value="F:toxin activity"/>
    <property type="evidence" value="ECO:0007669"/>
    <property type="project" value="UniProtKB-KW"/>
</dbReference>
<evidence type="ECO:0000250" key="1">
    <source>
        <dbReference type="UniProtKB" id="P0DM29"/>
    </source>
</evidence>
<evidence type="ECO:0000250" key="2">
    <source>
        <dbReference type="UniProtKB" id="P59868"/>
    </source>
</evidence>
<evidence type="ECO:0000255" key="3"/>
<evidence type="ECO:0000305" key="4"/>
<evidence type="ECO:0000305" key="5">
    <source>
    </source>
</evidence>
<evidence type="ECO:0000312" key="6">
    <source>
        <dbReference type="EMBL" id="ADY39527.1"/>
    </source>
</evidence>
<proteinExistence type="inferred from homology"/>
<protein>
    <recommendedName>
        <fullName evidence="6">Phi-buthitoxin-Hj1a</fullName>
        <shortName evidence="4">Phi-BUTX-Hj1a</shortName>
    </recommendedName>
</protein>
<name>CL1A_HOTJU</name>